<keyword id="KW-0521">NADP</keyword>
<keyword id="KW-0560">Oxidoreductase</keyword>
<comment type="function">
    <text evidence="2">NADP-dependent oxidoreductase; part of the lnb gene cluster that mediates the biosynthesis of diastereomeric piperazines. Lna and lnb clusters encode sets of enzymes that produce overlapping sets of previously undescribed metabolites such as piperazinomycin-like metabolites or morpholine (PubMed:23281040). The lna and lnb biosynthetic pathways appear to be part of a signaling network that controls the formation of sclerotia, a resilient overwintering structure (PubMed:23281040). One primary function of the non-canonical nonribosomal peptide synthetases lnaA and lnbA consists in the reduction of L-tyrosine (PubMed:23281040). The presence in the clusters of tailoring enzymes such as the oxidoreductases lnaB, lnbB, lnaE or lnbE, as well as of the cytochrome P450 monooxygenases lnaC, lnaD, or lnbC, might explain formation of various diastereomeric piperazines (PubMed:23281040).</text>
</comment>
<comment type="pathway">
    <text evidence="5">Secondary metabolite biosynthesis.</text>
</comment>
<comment type="similarity">
    <text evidence="4">Belongs to the NADP-dependent oxidoreductase L4BD family.</text>
</comment>
<sequence>MMSKLFTPLQVGFCQLKHRVIMAPLTRFRADDNNVPLPIAKEYYSQRASVPGTLIIAEATYISLAAGGYPNVPGIWSPEQIARWKEITDAVHAQGSYIFLQLWALGRVGDADTLKQDGFDLISSSAVPVDAGEPVPRAMTEEEIKQYIALYAQAARNAVMAGFDGVELHGGNGYLVDQFTQDTCNRRTDSWGGSIPNRSRFAVEVTRAMVQAIGSERVAVKLTPWNDQQGMKMKDMEQQFLHLITSLKELKLAYLHLTNPRVSVDEDVPLQGPPDGHPLEDNAGFVKAWGETSPVFLGGGYTPQSAKHTLDVDYPLNEIGAVFGRLFISNPDLPLRLRDGLPFTPYDRDSFYTPLSPIGYSDYPFSDQAVDLIPVRV</sequence>
<feature type="chain" id="PRO_0000446082" description="NADP-dependent oxidoreductase lnbE">
    <location>
        <begin position="1"/>
        <end position="377"/>
    </location>
</feature>
<feature type="binding site" evidence="1">
    <location>
        <begin position="170"/>
        <end position="173"/>
    </location>
    <ligand>
        <name>NADP(+)</name>
        <dbReference type="ChEBI" id="CHEBI:58349"/>
    </ligand>
</feature>
<feature type="binding site" evidence="1">
    <location>
        <begin position="257"/>
        <end position="263"/>
    </location>
    <ligand>
        <name>NADP(+)</name>
        <dbReference type="ChEBI" id="CHEBI:58349"/>
    </ligand>
</feature>
<feature type="binding site" evidence="1">
    <location>
        <begin position="293"/>
        <end position="295"/>
    </location>
    <ligand>
        <name>NADP(+)</name>
        <dbReference type="ChEBI" id="CHEBI:58349"/>
    </ligand>
</feature>
<accession>B8NWW6</accession>
<evidence type="ECO:0000250" key="1">
    <source>
        <dbReference type="UniProtKB" id="Q9EQZ5"/>
    </source>
</evidence>
<evidence type="ECO:0000269" key="2">
    <source>
    </source>
</evidence>
<evidence type="ECO:0000303" key="3">
    <source>
    </source>
</evidence>
<evidence type="ECO:0000305" key="4"/>
<evidence type="ECO:0000305" key="5">
    <source>
    </source>
</evidence>
<organism>
    <name type="scientific">Aspergillus flavus (strain ATCC 200026 / FGSC A1120 / IAM 13836 / NRRL 3357 / JCM 12722 / SRRC 167)</name>
    <dbReference type="NCBI Taxonomy" id="332952"/>
    <lineage>
        <taxon>Eukaryota</taxon>
        <taxon>Fungi</taxon>
        <taxon>Dikarya</taxon>
        <taxon>Ascomycota</taxon>
        <taxon>Pezizomycotina</taxon>
        <taxon>Eurotiomycetes</taxon>
        <taxon>Eurotiomycetidae</taxon>
        <taxon>Eurotiales</taxon>
        <taxon>Aspergillaceae</taxon>
        <taxon>Aspergillus</taxon>
        <taxon>Aspergillus subgen. Circumdati</taxon>
    </lineage>
</organism>
<reference key="1">
    <citation type="journal article" date="2015" name="Genome Announc.">
        <title>Genome sequence of Aspergillus flavus NRRL 3357, a strain that causes aflatoxin contamination of food and feed.</title>
        <authorList>
            <person name="Nierman W.C."/>
            <person name="Yu J."/>
            <person name="Fedorova-Abrams N.D."/>
            <person name="Losada L."/>
            <person name="Cleveland T.E."/>
            <person name="Bhatnagar D."/>
            <person name="Bennett J.W."/>
            <person name="Dean R."/>
            <person name="Payne G.A."/>
        </authorList>
    </citation>
    <scope>NUCLEOTIDE SEQUENCE [LARGE SCALE GENOMIC DNA]</scope>
    <source>
        <strain>ATCC 200026 / FGSC A1120 / IAM 13836 / NRRL 3357 / JCM 12722 / SRRC 167</strain>
    </source>
</reference>
<reference key="2">
    <citation type="journal article" date="2013" name="Angew. Chem. Int. Ed.">
        <title>Homologous NRPS-like gene clusters mediate redundant small-molecule biosynthesis in Aspergillus flavus.</title>
        <authorList>
            <person name="Forseth R.R."/>
            <person name="Amaike S."/>
            <person name="Schwenk D."/>
            <person name="Affeldt K.J."/>
            <person name="Hoffmeister D."/>
            <person name="Schroeder F.C."/>
            <person name="Keller N.P."/>
        </authorList>
    </citation>
    <scope>IDENTIFICATION</scope>
    <scope>FUNCTION</scope>
    <scope>PATHWAY</scope>
</reference>
<dbReference type="EC" id="1.-.-.-" evidence="5"/>
<dbReference type="EMBL" id="EQ963485">
    <property type="protein sequence ID" value="EED45924.1"/>
    <property type="molecule type" value="Genomic_DNA"/>
</dbReference>
<dbReference type="RefSeq" id="XP_002384860.1">
    <property type="nucleotide sequence ID" value="XM_002384819.1"/>
</dbReference>
<dbReference type="SMR" id="B8NWW6"/>
<dbReference type="STRING" id="332952.B8NWW6"/>
<dbReference type="EnsemblFungi" id="EED45924">
    <property type="protein sequence ID" value="EED45924"/>
    <property type="gene ID" value="AFLA_121530"/>
</dbReference>
<dbReference type="VEuPathDB" id="FungiDB:AFLA_014156"/>
<dbReference type="eggNOG" id="KOG0134">
    <property type="taxonomic scope" value="Eukaryota"/>
</dbReference>
<dbReference type="HOGENOM" id="CLU_012153_0_0_1"/>
<dbReference type="OMA" id="DQFWQDV"/>
<dbReference type="GO" id="GO:0010181">
    <property type="term" value="F:FMN binding"/>
    <property type="evidence" value="ECO:0007669"/>
    <property type="project" value="InterPro"/>
</dbReference>
<dbReference type="GO" id="GO:0003959">
    <property type="term" value="F:NADPH dehydrogenase activity"/>
    <property type="evidence" value="ECO:0007669"/>
    <property type="project" value="TreeGrafter"/>
</dbReference>
<dbReference type="CDD" id="cd02933">
    <property type="entry name" value="OYE_like_FMN"/>
    <property type="match status" value="1"/>
</dbReference>
<dbReference type="FunFam" id="3.20.20.70:FF:000138">
    <property type="entry name" value="NADPH dehydrogenase 1"/>
    <property type="match status" value="1"/>
</dbReference>
<dbReference type="Gene3D" id="3.20.20.70">
    <property type="entry name" value="Aldolase class I"/>
    <property type="match status" value="1"/>
</dbReference>
<dbReference type="InterPro" id="IPR013785">
    <property type="entry name" value="Aldolase_TIM"/>
</dbReference>
<dbReference type="InterPro" id="IPR001155">
    <property type="entry name" value="OxRdtase_FMN_N"/>
</dbReference>
<dbReference type="InterPro" id="IPR045247">
    <property type="entry name" value="Oye-like"/>
</dbReference>
<dbReference type="PANTHER" id="PTHR22893">
    <property type="entry name" value="NADH OXIDOREDUCTASE-RELATED"/>
    <property type="match status" value="1"/>
</dbReference>
<dbReference type="PANTHER" id="PTHR22893:SF91">
    <property type="entry name" value="NADPH DEHYDROGENASE 2-RELATED"/>
    <property type="match status" value="1"/>
</dbReference>
<dbReference type="Pfam" id="PF00724">
    <property type="entry name" value="Oxidored_FMN"/>
    <property type="match status" value="1"/>
</dbReference>
<dbReference type="SUPFAM" id="SSF51395">
    <property type="entry name" value="FMN-linked oxidoreductases"/>
    <property type="match status" value="1"/>
</dbReference>
<proteinExistence type="inferred from homology"/>
<protein>
    <recommendedName>
        <fullName evidence="3">NADP-dependent oxidoreductase lnbE</fullName>
        <ecNumber evidence="5">1.-.-.-</ecNumber>
    </recommendedName>
    <alternativeName>
        <fullName evidence="3">Lnb diastereomeric piperazines biosynthesis cluster protein E</fullName>
    </alternativeName>
</protein>
<name>LNBE_ASPFN</name>
<gene>
    <name evidence="3" type="primary">lnbE</name>
    <name type="ORF">AFLA_121530</name>
</gene>